<sequence length="1420" mass="161265">MWNSAENAFSRSTSFKDEIEDEEELRWAALQRLPTYSRIRRGIFRDMVGEPKEIQIGNLEASEQRLLLDRLVNSVENDPEQFFARVRKRFDAVDLKFPKIEVRFQNLMVESFVHVGSRALPTIPNFIINMAEGLLRNIHVIGGKRNKLTILDGISGVIRPSRLTLLLGPPSSGKTTLLLALAGRLGTNLQTSGKITYNGYDLKEIIAPRTSAYVSQQDWHVAEMTVRQTLEFAGRCQGVGFKYDMLLELARREKLAGIVPDEDLDIFMKSLALGGMETSLVVEYVMKILGLDTCADTLVGDEMIKGISGGQKKRLTTGELLVGPARVLFMDEISNGLDSSTTHQIIMYMRHSTHALEGTTVISLLQPSPETYELFDDVILMSEGQIIYQGPRDEVLDFFSSLGFTCPDRKNVADFLQEVTSKKDQQQYWSVPFRPYRYVPPGKFAEAFRSYPTGKKLAKKLEVPFDKRFNHSAALSTSQYGVKKSELLKINFAWQKQLMKQNAFIYVFKFVQLLLVALITMTVFCRTTMHHNTIDDGNIYLGSLYFSMVIILFNGFTEVPMLVAKLPVLYKHRDLHFYPSWAYTLPSWLLSIPTSIIESATWVAVTYYTIGYDPLFSRFLQQFLLYFSLHQMSLGLFRVMGSLGRHMIVANTFGSFAMLVVMTLGGFIISRDSIPSWWIWGYWISPLMYAQNAASVNEFLGHNWQKTAGNHTSDSLGLALLKERSLFSGNYWYWIGVAALLGYTVLFNILFTLFLAHLNPWGKFQAVVSREELDEREKKRKGDEFVVELREYLQHSGSIHGKYFKNRGMVLPFQPLSLSFSNINYYVDVPLGLKEQGILEDRLQLLVNITGAFRPGVLTALVGVSGAGKTTLMDVLAGRKTGGTIEGDVYISGFPKRQETFARISGYCEQNDVHSPCLTVVESLLFSACLRLPADIDSETQRAFVHEVMELVELTSLSGALVGLPGVDGLSTEQRKRLTIAVELVANPSIVFMDEPTSGLDARAAAIVMRTVRNIVNTGRTIVCTIHQPSIDIFESFDELLFMKRGGELIYAGPLGQKSCELIKYFESIEGVQKIKPGHNPAAWMLDVTASTEEHRLGVDFAEIYRNSNLCQRNKELIEVLSKPSNIAKEIEFPTRYSQSLYSQFVACLWKQNLSYWRNPQYTAVRFFYTVVISLMLGTICWKFGSKRDTQQQLFNAMGSMYAAVLFIGITNATAAQPVVSIERFVSYRERAAGMYSALPFAFAQVFIEFPYVLAQSTIYSTIFYAMAAFEWSAVKFLWYLFFMYFSIMYFTFYGMMTTAITPNHNVASIIAAPFYMLWNLFSGFMIPYKRIPLWWRWYYWANPVAWTLYGLLVSQYGDDERSVKLSDGIHQVMVKQLLEDVMGYKHDFLGVSAIMVVAFCVFFSLVFAFAIKAFNFQRR</sequence>
<dbReference type="EMBL" id="AC005168">
    <property type="protein sequence ID" value="AAC32236.1"/>
    <property type="molecule type" value="Genomic_DNA"/>
</dbReference>
<dbReference type="EMBL" id="CP002685">
    <property type="protein sequence ID" value="AEC07906.1"/>
    <property type="molecule type" value="Genomic_DNA"/>
</dbReference>
<dbReference type="EMBL" id="BX821941">
    <property type="status" value="NOT_ANNOTATED_CDS"/>
    <property type="molecule type" value="mRNA"/>
</dbReference>
<dbReference type="EMBL" id="BK001003">
    <property type="protein sequence ID" value="DAA00872.1"/>
    <property type="molecule type" value="Genomic_DNA"/>
</dbReference>
<dbReference type="PIR" id="T02644">
    <property type="entry name" value="T02644"/>
</dbReference>
<dbReference type="RefSeq" id="NP_180259.1">
    <property type="nucleotide sequence ID" value="NM_128248.2"/>
</dbReference>
<dbReference type="SMR" id="O81016"/>
<dbReference type="BioGRID" id="2584">
    <property type="interactions" value="1"/>
</dbReference>
<dbReference type="FunCoup" id="O81016">
    <property type="interactions" value="628"/>
</dbReference>
<dbReference type="STRING" id="3702.O81016"/>
<dbReference type="TCDB" id="3.A.1.205.16">
    <property type="family name" value="the atp-binding cassette (abc) superfamily"/>
</dbReference>
<dbReference type="iPTMnet" id="O81016"/>
<dbReference type="PaxDb" id="3702-AT2G26910.1"/>
<dbReference type="ProteomicsDB" id="245084"/>
<dbReference type="EnsemblPlants" id="AT2G26910.1">
    <property type="protein sequence ID" value="AT2G26910.1"/>
    <property type="gene ID" value="AT2G26910"/>
</dbReference>
<dbReference type="GeneID" id="817232"/>
<dbReference type="Gramene" id="AT2G26910.1">
    <property type="protein sequence ID" value="AT2G26910.1"/>
    <property type="gene ID" value="AT2G26910"/>
</dbReference>
<dbReference type="KEGG" id="ath:AT2G26910"/>
<dbReference type="Araport" id="AT2G26910"/>
<dbReference type="TAIR" id="AT2G26910">
    <property type="gene designation" value="ABCG32"/>
</dbReference>
<dbReference type="eggNOG" id="KOG0065">
    <property type="taxonomic scope" value="Eukaryota"/>
</dbReference>
<dbReference type="HOGENOM" id="CLU_000604_35_6_1"/>
<dbReference type="InParanoid" id="O81016"/>
<dbReference type="OMA" id="FCISNWA"/>
<dbReference type="OrthoDB" id="66620at2759"/>
<dbReference type="PhylomeDB" id="O81016"/>
<dbReference type="PRO" id="PR:O81016"/>
<dbReference type="Proteomes" id="UP000006548">
    <property type="component" value="Chromosome 2"/>
</dbReference>
<dbReference type="ExpressionAtlas" id="O81016">
    <property type="expression patterns" value="baseline and differential"/>
</dbReference>
<dbReference type="GO" id="GO:0005777">
    <property type="term" value="C:peroxisome"/>
    <property type="evidence" value="ECO:0007005"/>
    <property type="project" value="TAIR"/>
</dbReference>
<dbReference type="GO" id="GO:0005886">
    <property type="term" value="C:plasma membrane"/>
    <property type="evidence" value="ECO:0000314"/>
    <property type="project" value="TAIR"/>
</dbReference>
<dbReference type="GO" id="GO:0140359">
    <property type="term" value="F:ABC-type transporter activity"/>
    <property type="evidence" value="ECO:0007669"/>
    <property type="project" value="InterPro"/>
</dbReference>
<dbReference type="GO" id="GO:0005524">
    <property type="term" value="F:ATP binding"/>
    <property type="evidence" value="ECO:0007669"/>
    <property type="project" value="UniProtKB-KW"/>
</dbReference>
<dbReference type="GO" id="GO:0016887">
    <property type="term" value="F:ATP hydrolysis activity"/>
    <property type="evidence" value="ECO:0007669"/>
    <property type="project" value="InterPro"/>
</dbReference>
<dbReference type="GO" id="GO:0080051">
    <property type="term" value="P:cutin transport"/>
    <property type="evidence" value="ECO:0000315"/>
    <property type="project" value="TAIR"/>
</dbReference>
<dbReference type="CDD" id="cd03233">
    <property type="entry name" value="ABCG_PDR_domain1"/>
    <property type="match status" value="1"/>
</dbReference>
<dbReference type="CDD" id="cd03232">
    <property type="entry name" value="ABCG_PDR_domain2"/>
    <property type="match status" value="1"/>
</dbReference>
<dbReference type="FunFam" id="3.40.50.300:FF:000157">
    <property type="entry name" value="ABC transporter G family member 34"/>
    <property type="match status" value="1"/>
</dbReference>
<dbReference type="FunFam" id="3.40.50.300:FF:000179">
    <property type="entry name" value="ABC transporter G family member 34"/>
    <property type="match status" value="1"/>
</dbReference>
<dbReference type="Gene3D" id="3.40.50.300">
    <property type="entry name" value="P-loop containing nucleotide triphosphate hydrolases"/>
    <property type="match status" value="2"/>
</dbReference>
<dbReference type="InterPro" id="IPR003593">
    <property type="entry name" value="AAA+_ATPase"/>
</dbReference>
<dbReference type="InterPro" id="IPR013525">
    <property type="entry name" value="ABC2_TM"/>
</dbReference>
<dbReference type="InterPro" id="IPR029481">
    <property type="entry name" value="ABC_trans_N"/>
</dbReference>
<dbReference type="InterPro" id="IPR003439">
    <property type="entry name" value="ABC_transporter-like_ATP-bd"/>
</dbReference>
<dbReference type="InterPro" id="IPR043926">
    <property type="entry name" value="ABCG_dom"/>
</dbReference>
<dbReference type="InterPro" id="IPR034001">
    <property type="entry name" value="ABCG_PDR_1"/>
</dbReference>
<dbReference type="InterPro" id="IPR034003">
    <property type="entry name" value="ABCG_PDR_2"/>
</dbReference>
<dbReference type="InterPro" id="IPR027417">
    <property type="entry name" value="P-loop_NTPase"/>
</dbReference>
<dbReference type="InterPro" id="IPR013581">
    <property type="entry name" value="PDR_assoc"/>
</dbReference>
<dbReference type="PANTHER" id="PTHR48040:SF12">
    <property type="entry name" value="ABC TRANSPORTER G FAMILY MEMBER 32-LIKE ISOFORM X1"/>
    <property type="match status" value="1"/>
</dbReference>
<dbReference type="PANTHER" id="PTHR48040">
    <property type="entry name" value="PLEIOTROPIC DRUG RESISTANCE PROTEIN 1-LIKE ISOFORM X1"/>
    <property type="match status" value="1"/>
</dbReference>
<dbReference type="Pfam" id="PF01061">
    <property type="entry name" value="ABC2_membrane"/>
    <property type="match status" value="2"/>
</dbReference>
<dbReference type="Pfam" id="PF19055">
    <property type="entry name" value="ABC2_membrane_7"/>
    <property type="match status" value="1"/>
</dbReference>
<dbReference type="Pfam" id="PF00005">
    <property type="entry name" value="ABC_tran"/>
    <property type="match status" value="2"/>
</dbReference>
<dbReference type="Pfam" id="PF14510">
    <property type="entry name" value="ABC_trans_N"/>
    <property type="match status" value="1"/>
</dbReference>
<dbReference type="Pfam" id="PF08370">
    <property type="entry name" value="PDR_assoc"/>
    <property type="match status" value="1"/>
</dbReference>
<dbReference type="SMART" id="SM00382">
    <property type="entry name" value="AAA"/>
    <property type="match status" value="2"/>
</dbReference>
<dbReference type="SUPFAM" id="SSF52540">
    <property type="entry name" value="P-loop containing nucleoside triphosphate hydrolases"/>
    <property type="match status" value="2"/>
</dbReference>
<dbReference type="PROSITE" id="PS50893">
    <property type="entry name" value="ABC_TRANSPORTER_2"/>
    <property type="match status" value="2"/>
</dbReference>
<feature type="chain" id="PRO_0000234631" description="ABC transporter G family member 32">
    <location>
        <begin position="1"/>
        <end position="1420"/>
    </location>
</feature>
<feature type="transmembrane region" description="Helical" evidence="2">
    <location>
        <begin position="504"/>
        <end position="524"/>
    </location>
</feature>
<feature type="transmembrane region" description="Helical" evidence="2">
    <location>
        <begin position="544"/>
        <end position="564"/>
    </location>
</feature>
<feature type="transmembrane region" description="Helical" evidence="2">
    <location>
        <begin position="585"/>
        <end position="605"/>
    </location>
</feature>
<feature type="transmembrane region" description="Helical" evidence="2">
    <location>
        <begin position="623"/>
        <end position="643"/>
    </location>
</feature>
<feature type="transmembrane region" description="Helical" evidence="2">
    <location>
        <begin position="648"/>
        <end position="668"/>
    </location>
</feature>
<feature type="transmembrane region" description="Helical" evidence="2">
    <location>
        <begin position="674"/>
        <end position="694"/>
    </location>
</feature>
<feature type="transmembrane region" description="Helical" evidence="2">
    <location>
        <begin position="735"/>
        <end position="755"/>
    </location>
</feature>
<feature type="transmembrane region" description="Helical" evidence="2">
    <location>
        <begin position="1162"/>
        <end position="1182"/>
    </location>
</feature>
<feature type="transmembrane region" description="Helical" evidence="2">
    <location>
        <begin position="1202"/>
        <end position="1222"/>
    </location>
</feature>
<feature type="transmembrane region" description="Helical" evidence="2">
    <location>
        <begin position="1235"/>
        <end position="1255"/>
    </location>
</feature>
<feature type="transmembrane region" description="Helical" evidence="2">
    <location>
        <begin position="1277"/>
        <end position="1297"/>
    </location>
</feature>
<feature type="transmembrane region" description="Helical" evidence="2">
    <location>
        <begin position="1307"/>
        <end position="1327"/>
    </location>
</feature>
<feature type="transmembrane region" description="Helical" evidence="2">
    <location>
        <begin position="1334"/>
        <end position="1354"/>
    </location>
</feature>
<feature type="transmembrane region" description="Helical" evidence="2">
    <location>
        <begin position="1392"/>
        <end position="1412"/>
    </location>
</feature>
<feature type="domain" description="ABC transporter 1" evidence="3">
    <location>
        <begin position="135"/>
        <end position="408"/>
    </location>
</feature>
<feature type="domain" description="ABC transmembrane type-2 1">
    <location>
        <begin position="486"/>
        <end position="699"/>
    </location>
</feature>
<feature type="domain" description="ABC transporter 2" evidence="3">
    <location>
        <begin position="818"/>
        <end position="1070"/>
    </location>
</feature>
<feature type="domain" description="ABC transmembrane type-2 2">
    <location>
        <begin position="1143"/>
        <end position="1357"/>
    </location>
</feature>
<feature type="binding site" evidence="3">
    <location>
        <begin position="168"/>
        <end position="175"/>
    </location>
    <ligand>
        <name>ATP</name>
        <dbReference type="ChEBI" id="CHEBI:30616"/>
        <label>1</label>
    </ligand>
</feature>
<feature type="binding site" evidence="3">
    <location>
        <begin position="863"/>
        <end position="870"/>
    </location>
    <ligand>
        <name>ATP</name>
        <dbReference type="ChEBI" id="CHEBI:30616"/>
        <label>2</label>
    </ligand>
</feature>
<evidence type="ECO:0000250" key="1"/>
<evidence type="ECO:0000255" key="2"/>
<evidence type="ECO:0000255" key="3">
    <source>
        <dbReference type="PROSITE-ProRule" id="PRU00434"/>
    </source>
</evidence>
<evidence type="ECO:0000269" key="4">
    <source>
    </source>
</evidence>
<evidence type="ECO:0000269" key="5">
    <source>
    </source>
</evidence>
<evidence type="ECO:0000303" key="6">
    <source>
    </source>
</evidence>
<evidence type="ECO:0000303" key="7">
    <source>
    </source>
</evidence>
<evidence type="ECO:0000303" key="8">
    <source>
    </source>
</evidence>
<evidence type="ECO:0000303" key="9">
    <source>
    </source>
</evidence>
<evidence type="ECO:0000305" key="10"/>
<evidence type="ECO:0000312" key="11">
    <source>
        <dbReference type="Araport" id="AT2G26910"/>
    </source>
</evidence>
<evidence type="ECO:0000312" key="12">
    <source>
        <dbReference type="EMBL" id="AAC32236.1"/>
    </source>
</evidence>
<accession>O81016</accession>
<proteinExistence type="evidence at protein level"/>
<name>AB32G_ARATH</name>
<comment type="function">
    <text evidence="1 5">May be a general defense protein (By similarity). Required for the formation of the cuticle layer of the cell wall (PubMed:21628525).</text>
</comment>
<comment type="subcellular location">
    <subcellularLocation>
        <location evidence="5">Cell membrane</location>
        <topology evidence="5">Multi-pass membrane protein</topology>
    </subcellularLocation>
</comment>
<comment type="tissue specificity">
    <text evidence="4 5">Ubiquitous in aerial organs (PubMed:12430018, PubMed:21628525). Higher expression levels in young, expanding tissues than in older tissues. Detected in the epidermal layer (PubMed:21628525).</text>
</comment>
<comment type="induction">
    <text evidence="4">Repressed by cycloheximide (CHX) and abscisic acid (ABA).</text>
</comment>
<comment type="disruption phenotype">
    <text evidence="5">Chemical composition modifications and structural alterations of the cuticular layer of the cell wall leading to increased permeability of the cuticle, increased sensitivity to herbicide (glufosidate), increased cuticular transpiration and increased resistance to Botrytis cinerea.</text>
</comment>
<comment type="similarity">
    <text evidence="10">Belongs to the ABC transporter superfamily. ABCG family. PDR (TC 3.A.1.205) subfamily.</text>
</comment>
<organism>
    <name type="scientific">Arabidopsis thaliana</name>
    <name type="common">Mouse-ear cress</name>
    <dbReference type="NCBI Taxonomy" id="3702"/>
    <lineage>
        <taxon>Eukaryota</taxon>
        <taxon>Viridiplantae</taxon>
        <taxon>Streptophyta</taxon>
        <taxon>Embryophyta</taxon>
        <taxon>Tracheophyta</taxon>
        <taxon>Spermatophyta</taxon>
        <taxon>Magnoliopsida</taxon>
        <taxon>eudicotyledons</taxon>
        <taxon>Gunneridae</taxon>
        <taxon>Pentapetalae</taxon>
        <taxon>rosids</taxon>
        <taxon>malvids</taxon>
        <taxon>Brassicales</taxon>
        <taxon>Brassicaceae</taxon>
        <taxon>Camelineae</taxon>
        <taxon>Arabidopsis</taxon>
    </lineage>
</organism>
<gene>
    <name evidence="8" type="primary">ABCG32</name>
    <name evidence="6 7" type="synonym">PDR4</name>
    <name evidence="9" type="synonym">PEC1</name>
    <name evidence="11" type="ordered locus">At2g26910</name>
    <name evidence="12" type="ORF">F12C20.5</name>
</gene>
<keyword id="KW-0067">ATP-binding</keyword>
<keyword id="KW-1003">Cell membrane</keyword>
<keyword id="KW-0472">Membrane</keyword>
<keyword id="KW-0547">Nucleotide-binding</keyword>
<keyword id="KW-1185">Reference proteome</keyword>
<keyword id="KW-0677">Repeat</keyword>
<keyword id="KW-0812">Transmembrane</keyword>
<keyword id="KW-1133">Transmembrane helix</keyword>
<keyword id="KW-0813">Transport</keyword>
<protein>
    <recommendedName>
        <fullName evidence="8">ABC transporter G family member 32</fullName>
        <shortName>ABC transporter ABCG.32</shortName>
        <shortName evidence="8">AtABCG32</shortName>
    </recommendedName>
    <alternativeName>
        <fullName evidence="6 7">Pleiotropic drug resistance protein 4</fullName>
    </alternativeName>
    <alternativeName>
        <fullName evidence="9">Protein PERMEABLE CUTICLE 1</fullName>
    </alternativeName>
</protein>
<reference key="1">
    <citation type="journal article" date="1999" name="Nature">
        <title>Sequence and analysis of chromosome 2 of the plant Arabidopsis thaliana.</title>
        <authorList>
            <person name="Lin X."/>
            <person name="Kaul S."/>
            <person name="Rounsley S.D."/>
            <person name="Shea T.P."/>
            <person name="Benito M.-I."/>
            <person name="Town C.D."/>
            <person name="Fujii C.Y."/>
            <person name="Mason T.M."/>
            <person name="Bowman C.L."/>
            <person name="Barnstead M.E."/>
            <person name="Feldblyum T.V."/>
            <person name="Buell C.R."/>
            <person name="Ketchum K.A."/>
            <person name="Lee J.J."/>
            <person name="Ronning C.M."/>
            <person name="Koo H.L."/>
            <person name="Moffat K.S."/>
            <person name="Cronin L.A."/>
            <person name="Shen M."/>
            <person name="Pai G."/>
            <person name="Van Aken S."/>
            <person name="Umayam L."/>
            <person name="Tallon L.J."/>
            <person name="Gill J.E."/>
            <person name="Adams M.D."/>
            <person name="Carrera A.J."/>
            <person name="Creasy T.H."/>
            <person name="Goodman H.M."/>
            <person name="Somerville C.R."/>
            <person name="Copenhaver G.P."/>
            <person name="Preuss D."/>
            <person name="Nierman W.C."/>
            <person name="White O."/>
            <person name="Eisen J.A."/>
            <person name="Salzberg S.L."/>
            <person name="Fraser C.M."/>
            <person name="Venter J.C."/>
        </authorList>
    </citation>
    <scope>NUCLEOTIDE SEQUENCE [LARGE SCALE GENOMIC DNA]</scope>
    <source>
        <strain>cv. Columbia</strain>
    </source>
</reference>
<reference key="2">
    <citation type="journal article" date="2017" name="Plant J.">
        <title>Araport11: a complete reannotation of the Arabidopsis thaliana reference genome.</title>
        <authorList>
            <person name="Cheng C.Y."/>
            <person name="Krishnakumar V."/>
            <person name="Chan A.P."/>
            <person name="Thibaud-Nissen F."/>
            <person name="Schobel S."/>
            <person name="Town C.D."/>
        </authorList>
    </citation>
    <scope>GENOME REANNOTATION</scope>
    <source>
        <strain>cv. Columbia</strain>
    </source>
</reference>
<reference key="3">
    <citation type="journal article" date="2004" name="Genome Res.">
        <title>Whole genome sequence comparisons and 'full-length' cDNA sequences: a combined approach to evaluate and improve Arabidopsis genome annotation.</title>
        <authorList>
            <person name="Castelli V."/>
            <person name="Aury J.-M."/>
            <person name="Jaillon O."/>
            <person name="Wincker P."/>
            <person name="Clepet C."/>
            <person name="Menard M."/>
            <person name="Cruaud C."/>
            <person name="Quetier F."/>
            <person name="Scarpelli C."/>
            <person name="Schaechter V."/>
            <person name="Temple G."/>
            <person name="Caboche M."/>
            <person name="Weissenbach J."/>
            <person name="Salanoubat M."/>
        </authorList>
    </citation>
    <scope>NUCLEOTIDE SEQUENCE [LARGE SCALE MRNA] OF 1355-1420</scope>
    <source>
        <strain>cv. Columbia</strain>
    </source>
</reference>
<reference key="4">
    <citation type="journal article" date="2002" name="Planta">
        <title>The plant PDR family of ABC transporters.</title>
        <authorList>
            <person name="van den Brule S."/>
            <person name="Smart C.C."/>
        </authorList>
    </citation>
    <scope>IDENTIFICATION</scope>
    <scope>TISSUE SPECIFICITY</scope>
    <scope>INDUCTION</scope>
</reference>
<reference key="5">
    <citation type="journal article" date="2006" name="FEBS Lett.">
        <title>Organization and function of the plant pleiotropic drug resistance ABC transporter family.</title>
        <authorList>
            <person name="Crouzet J."/>
            <person name="Trombik T."/>
            <person name="Fraysse A.S."/>
            <person name="Boutry M."/>
        </authorList>
    </citation>
    <scope>GENE FAMILY</scope>
    <scope>NOMENCLATURE</scope>
</reference>
<reference key="6">
    <citation type="journal article" date="2008" name="Trends Plant Sci.">
        <title>Plant ABC proteins - a unified nomenclature and updated inventory.</title>
        <authorList>
            <person name="Verrier P.J."/>
            <person name="Bird D."/>
            <person name="Burla B."/>
            <person name="Dassa E."/>
            <person name="Forestier C."/>
            <person name="Geisler M."/>
            <person name="Klein M."/>
            <person name="Kolukisaoglu H.U."/>
            <person name="Lee Y."/>
            <person name="Martinoia E."/>
            <person name="Murphy A."/>
            <person name="Rea P.A."/>
            <person name="Samuels L."/>
            <person name="Schulz B."/>
            <person name="Spalding E.J."/>
            <person name="Yazaki K."/>
            <person name="Theodoulou F.L."/>
        </authorList>
    </citation>
    <scope>GENE FAMILY</scope>
    <scope>NOMENCLATURE</scope>
</reference>
<reference key="7">
    <citation type="journal article" date="2009" name="Plant Physiol.">
        <title>Large-scale Arabidopsis phosphoproteome profiling reveals novel chloroplast kinase substrates and phosphorylation networks.</title>
        <authorList>
            <person name="Reiland S."/>
            <person name="Messerli G."/>
            <person name="Baerenfaller K."/>
            <person name="Gerrits B."/>
            <person name="Endler A."/>
            <person name="Grossmann J."/>
            <person name="Gruissem W."/>
            <person name="Baginsky S."/>
        </authorList>
    </citation>
    <scope>IDENTIFICATION BY MASS SPECTROMETRY [LARGE SCALE ANALYSIS]</scope>
</reference>
<reference key="8">
    <citation type="journal article" date="2011" name="Plant Cell">
        <title>A member of the PLEIOTROPIC DRUG RESISTANCE family of ATP binding cassette transporters is required for the formation of a functional cuticle in Arabidopsis.</title>
        <authorList>
            <person name="Bessire M."/>
            <person name="Borel S."/>
            <person name="Fabre G."/>
            <person name="Carraca L."/>
            <person name="Efremova N."/>
            <person name="Yephremov A."/>
            <person name="Cao Y."/>
            <person name="Jetter R."/>
            <person name="Jacquat A.C."/>
            <person name="Metraux J.P."/>
            <person name="Nawrath C."/>
        </authorList>
    </citation>
    <scope>FUNCTION</scope>
    <scope>DISRUPTION PHENOTYPE</scope>
    <scope>TISSUE SPECIFICITY</scope>
    <scope>SUBCELLULAR LOCATION</scope>
</reference>